<gene>
    <name evidence="1" type="primary">infA</name>
    <name type="ordered locus">CE0568</name>
</gene>
<evidence type="ECO:0000255" key="1">
    <source>
        <dbReference type="HAMAP-Rule" id="MF_00075"/>
    </source>
</evidence>
<evidence type="ECO:0000305" key="2"/>
<accession>Q8FS36</accession>
<sequence length="72" mass="8361">MAKEGAIEVEGRVVEPLPNAMFRVELDNGHKVLAHISGKMRQHYIRILPEDRVVVELSPYDLTRGRIVYRYK</sequence>
<keyword id="KW-0963">Cytoplasm</keyword>
<keyword id="KW-0396">Initiation factor</keyword>
<keyword id="KW-0648">Protein biosynthesis</keyword>
<keyword id="KW-1185">Reference proteome</keyword>
<keyword id="KW-0694">RNA-binding</keyword>
<keyword id="KW-0699">rRNA-binding</keyword>
<feature type="chain" id="PRO_0000095778" description="Translation initiation factor IF-1">
    <location>
        <begin position="1"/>
        <end position="72"/>
    </location>
</feature>
<feature type="domain" description="S1-like" evidence="1">
    <location>
        <begin position="1"/>
        <end position="72"/>
    </location>
</feature>
<dbReference type="EMBL" id="BA000035">
    <property type="protein sequence ID" value="BAC17378.1"/>
    <property type="status" value="ALT_INIT"/>
    <property type="molecule type" value="Genomic_DNA"/>
</dbReference>
<dbReference type="RefSeq" id="WP_006769757.1">
    <property type="nucleotide sequence ID" value="NC_004369.1"/>
</dbReference>
<dbReference type="SMR" id="Q8FS36"/>
<dbReference type="STRING" id="196164.gene:10740970"/>
<dbReference type="KEGG" id="cef:CE0568"/>
<dbReference type="eggNOG" id="COG0361">
    <property type="taxonomic scope" value="Bacteria"/>
</dbReference>
<dbReference type="HOGENOM" id="CLU_2036222_0_0_11"/>
<dbReference type="OrthoDB" id="9803250at2"/>
<dbReference type="Proteomes" id="UP000001409">
    <property type="component" value="Chromosome"/>
</dbReference>
<dbReference type="GO" id="GO:0005829">
    <property type="term" value="C:cytosol"/>
    <property type="evidence" value="ECO:0007669"/>
    <property type="project" value="TreeGrafter"/>
</dbReference>
<dbReference type="GO" id="GO:0043022">
    <property type="term" value="F:ribosome binding"/>
    <property type="evidence" value="ECO:0007669"/>
    <property type="project" value="UniProtKB-UniRule"/>
</dbReference>
<dbReference type="GO" id="GO:0019843">
    <property type="term" value="F:rRNA binding"/>
    <property type="evidence" value="ECO:0007669"/>
    <property type="project" value="UniProtKB-UniRule"/>
</dbReference>
<dbReference type="GO" id="GO:0003743">
    <property type="term" value="F:translation initiation factor activity"/>
    <property type="evidence" value="ECO:0007669"/>
    <property type="project" value="UniProtKB-UniRule"/>
</dbReference>
<dbReference type="CDD" id="cd04451">
    <property type="entry name" value="S1_IF1"/>
    <property type="match status" value="1"/>
</dbReference>
<dbReference type="FunFam" id="2.40.50.140:FF:000002">
    <property type="entry name" value="Translation initiation factor IF-1"/>
    <property type="match status" value="1"/>
</dbReference>
<dbReference type="Gene3D" id="2.40.50.140">
    <property type="entry name" value="Nucleic acid-binding proteins"/>
    <property type="match status" value="1"/>
</dbReference>
<dbReference type="HAMAP" id="MF_00075">
    <property type="entry name" value="IF_1"/>
    <property type="match status" value="1"/>
</dbReference>
<dbReference type="InterPro" id="IPR012340">
    <property type="entry name" value="NA-bd_OB-fold"/>
</dbReference>
<dbReference type="InterPro" id="IPR006196">
    <property type="entry name" value="RNA-binding_domain_S1_IF1"/>
</dbReference>
<dbReference type="InterPro" id="IPR003029">
    <property type="entry name" value="S1_domain"/>
</dbReference>
<dbReference type="InterPro" id="IPR004368">
    <property type="entry name" value="TIF_IF1"/>
</dbReference>
<dbReference type="NCBIfam" id="TIGR00008">
    <property type="entry name" value="infA"/>
    <property type="match status" value="1"/>
</dbReference>
<dbReference type="PANTHER" id="PTHR33370">
    <property type="entry name" value="TRANSLATION INITIATION FACTOR IF-1, CHLOROPLASTIC"/>
    <property type="match status" value="1"/>
</dbReference>
<dbReference type="PANTHER" id="PTHR33370:SF1">
    <property type="entry name" value="TRANSLATION INITIATION FACTOR IF-1, CHLOROPLASTIC"/>
    <property type="match status" value="1"/>
</dbReference>
<dbReference type="Pfam" id="PF01176">
    <property type="entry name" value="eIF-1a"/>
    <property type="match status" value="1"/>
</dbReference>
<dbReference type="SMART" id="SM00316">
    <property type="entry name" value="S1"/>
    <property type="match status" value="1"/>
</dbReference>
<dbReference type="SUPFAM" id="SSF50249">
    <property type="entry name" value="Nucleic acid-binding proteins"/>
    <property type="match status" value="1"/>
</dbReference>
<dbReference type="PROSITE" id="PS50832">
    <property type="entry name" value="S1_IF1_TYPE"/>
    <property type="match status" value="1"/>
</dbReference>
<protein>
    <recommendedName>
        <fullName evidence="1">Translation initiation factor IF-1</fullName>
    </recommendedName>
</protein>
<reference key="1">
    <citation type="journal article" date="2003" name="Genome Res.">
        <title>Comparative complete genome sequence analysis of the amino acid replacements responsible for the thermostability of Corynebacterium efficiens.</title>
        <authorList>
            <person name="Nishio Y."/>
            <person name="Nakamura Y."/>
            <person name="Kawarabayasi Y."/>
            <person name="Usuda Y."/>
            <person name="Kimura E."/>
            <person name="Sugimoto S."/>
            <person name="Matsui K."/>
            <person name="Yamagishi A."/>
            <person name="Kikuchi H."/>
            <person name="Ikeo K."/>
            <person name="Gojobori T."/>
        </authorList>
    </citation>
    <scope>NUCLEOTIDE SEQUENCE [LARGE SCALE GENOMIC DNA]</scope>
    <source>
        <strain>DSM 44549 / YS-314 / AJ 12310 / JCM 11189 / NBRC 100395</strain>
    </source>
</reference>
<organism>
    <name type="scientific">Corynebacterium efficiens (strain DSM 44549 / YS-314 / AJ 12310 / JCM 11189 / NBRC 100395)</name>
    <dbReference type="NCBI Taxonomy" id="196164"/>
    <lineage>
        <taxon>Bacteria</taxon>
        <taxon>Bacillati</taxon>
        <taxon>Actinomycetota</taxon>
        <taxon>Actinomycetes</taxon>
        <taxon>Mycobacteriales</taxon>
        <taxon>Corynebacteriaceae</taxon>
        <taxon>Corynebacterium</taxon>
    </lineage>
</organism>
<proteinExistence type="inferred from homology"/>
<name>IF1_COREF</name>
<comment type="function">
    <text evidence="1">One of the essential components for the initiation of protein synthesis. Stabilizes the binding of IF-2 and IF-3 on the 30S subunit to which N-formylmethionyl-tRNA(fMet) subsequently binds. Helps modulate mRNA selection, yielding the 30S pre-initiation complex (PIC). Upon addition of the 50S ribosomal subunit IF-1, IF-2 and IF-3 are released leaving the mature 70S translation initiation complex.</text>
</comment>
<comment type="subunit">
    <text evidence="1">Component of the 30S ribosomal translation pre-initiation complex which assembles on the 30S ribosome in the order IF-2 and IF-3, IF-1 and N-formylmethionyl-tRNA(fMet); mRNA recruitment can occur at any time during PIC assembly.</text>
</comment>
<comment type="subcellular location">
    <subcellularLocation>
        <location evidence="1">Cytoplasm</location>
    </subcellularLocation>
</comment>
<comment type="similarity">
    <text evidence="1">Belongs to the IF-1 family.</text>
</comment>
<comment type="sequence caution" evidence="2">
    <conflict type="erroneous initiation">
        <sequence resource="EMBL-CDS" id="BAC17378"/>
    </conflict>
    <text>Extended N-terminus.</text>
</comment>